<comment type="function">
    <text evidence="1">Specifically phosphorylates the agonist-occupied form of the beta-adrenergic and closely related receptors.</text>
</comment>
<comment type="catalytic activity">
    <reaction evidence="1">
        <text>[beta-adrenergic receptor] + ATP = [beta-adrenergic receptor]-phosphate + ADP + H(+)</text>
        <dbReference type="Rhea" id="RHEA:19429"/>
        <dbReference type="Rhea" id="RHEA-COMP:11222"/>
        <dbReference type="Rhea" id="RHEA-COMP:11223"/>
        <dbReference type="ChEBI" id="CHEBI:15378"/>
        <dbReference type="ChEBI" id="CHEBI:30616"/>
        <dbReference type="ChEBI" id="CHEBI:43176"/>
        <dbReference type="ChEBI" id="CHEBI:68546"/>
        <dbReference type="ChEBI" id="CHEBI:456216"/>
        <dbReference type="EC" id="2.7.11.15"/>
    </reaction>
    <physiologicalReaction direction="left-to-right" evidence="1">
        <dbReference type="Rhea" id="RHEA:19430"/>
    </physiologicalReaction>
</comment>
<comment type="subunit">
    <text evidence="1">Interacts with GIT1.</text>
</comment>
<comment type="subcellular location">
    <subcellularLocation>
        <location evidence="1">Postsynapse</location>
    </subcellularLocation>
    <subcellularLocation>
        <location evidence="1">Presynapse</location>
    </subcellularLocation>
</comment>
<comment type="PTM">
    <text evidence="2">Ubiquitinated.</text>
</comment>
<comment type="similarity">
    <text evidence="8">Belongs to the protein kinase superfamily. AGC Ser/Thr protein kinase family. GPRK subfamily.</text>
</comment>
<organism>
    <name type="scientific">Mus musculus</name>
    <name type="common">Mouse</name>
    <dbReference type="NCBI Taxonomy" id="10090"/>
    <lineage>
        <taxon>Eukaryota</taxon>
        <taxon>Metazoa</taxon>
        <taxon>Chordata</taxon>
        <taxon>Craniata</taxon>
        <taxon>Vertebrata</taxon>
        <taxon>Euteleostomi</taxon>
        <taxon>Mammalia</taxon>
        <taxon>Eutheria</taxon>
        <taxon>Euarchontoglires</taxon>
        <taxon>Glires</taxon>
        <taxon>Rodentia</taxon>
        <taxon>Myomorpha</taxon>
        <taxon>Muroidea</taxon>
        <taxon>Muridae</taxon>
        <taxon>Murinae</taxon>
        <taxon>Mus</taxon>
        <taxon>Mus</taxon>
    </lineage>
</organism>
<accession>Q3UYH7</accession>
<accession>F8VPM8</accession>
<name>ARBK2_MOUSE</name>
<feature type="chain" id="PRO_0000260828" description="G protein-coupled receptor kinase 3">
    <location>
        <begin position="1"/>
        <end position="688"/>
    </location>
</feature>
<feature type="domain" description="RGS" evidence="5">
    <location>
        <begin position="54"/>
        <end position="175"/>
    </location>
</feature>
<feature type="domain" description="Protein kinase" evidence="4">
    <location>
        <begin position="191"/>
        <end position="453"/>
    </location>
</feature>
<feature type="domain" description="AGC-kinase C-terminal" evidence="6">
    <location>
        <begin position="454"/>
        <end position="521"/>
    </location>
</feature>
<feature type="domain" description="PH" evidence="3">
    <location>
        <begin position="558"/>
        <end position="652"/>
    </location>
</feature>
<feature type="region of interest" description="N-terminal">
    <location>
        <begin position="1"/>
        <end position="190"/>
    </location>
</feature>
<feature type="active site" description="Proton acceptor" evidence="4 7">
    <location>
        <position position="317"/>
    </location>
</feature>
<feature type="binding site" evidence="4">
    <location>
        <begin position="197"/>
        <end position="205"/>
    </location>
    <ligand>
        <name>ATP</name>
        <dbReference type="ChEBI" id="CHEBI:30616"/>
    </ligand>
</feature>
<feature type="binding site" evidence="4">
    <location>
        <position position="220"/>
    </location>
    <ligand>
        <name>ATP</name>
        <dbReference type="ChEBI" id="CHEBI:30616"/>
    </ligand>
</feature>
<feature type="sequence conflict" description="In Ref. 1; BAE22235." evidence="8" ref="1">
    <original>K</original>
    <variation>N</variation>
    <location>
        <position position="319"/>
    </location>
</feature>
<gene>
    <name evidence="9" type="primary">Grk3</name>
    <name evidence="2" type="synonym">Adrbk2</name>
</gene>
<evidence type="ECO:0000250" key="1">
    <source>
        <dbReference type="UniProtKB" id="P26819"/>
    </source>
</evidence>
<evidence type="ECO:0000250" key="2">
    <source>
        <dbReference type="UniProtKB" id="P35626"/>
    </source>
</evidence>
<evidence type="ECO:0000255" key="3">
    <source>
        <dbReference type="PROSITE-ProRule" id="PRU00145"/>
    </source>
</evidence>
<evidence type="ECO:0000255" key="4">
    <source>
        <dbReference type="PROSITE-ProRule" id="PRU00159"/>
    </source>
</evidence>
<evidence type="ECO:0000255" key="5">
    <source>
        <dbReference type="PROSITE-ProRule" id="PRU00171"/>
    </source>
</evidence>
<evidence type="ECO:0000255" key="6">
    <source>
        <dbReference type="PROSITE-ProRule" id="PRU00618"/>
    </source>
</evidence>
<evidence type="ECO:0000255" key="7">
    <source>
        <dbReference type="PROSITE-ProRule" id="PRU10027"/>
    </source>
</evidence>
<evidence type="ECO:0000305" key="8"/>
<evidence type="ECO:0000312" key="9">
    <source>
        <dbReference type="MGI" id="MGI:87941"/>
    </source>
</evidence>
<sequence length="688" mass="79657">MADLEAVLADVSYLMAMEKSKTAPAARASKKVVLPEPSIRSVMQRYLAERNEITFDKIFNQKIGFLLFKDFCLNEIGEAVPQVKFYEEIKEYEKLDNEEDRLRRSRQMYDAYIMRELLSSTHQFSKQAVEHVQSHLSKKQVTATLFQPYIEEICESLRGDIFQKFMESDKFTRFCQWKNVELNIHLSMNDFSVHRIIGRGGFGEVYGCRKADTGKMYAMKCLDKKRVKMKQGETLALNERIMLSLVSTGDCPFIVCMTYAFHTPDKLCFILDLMNGGDMHYHLSQHGVFSEKEMRFYASEIILGLEHMHTCFVVYRDLKPANILLDEYGHVRISDLGLACDFSKKKPHASVGTHGYMAPEVLQKGTCYDSSADWFSLGCMLFKLLRGHSPFRQHKTKDKHEIDRMTLTVNVQLPDAFSPELRSLLEGLLQRDVSQRLGCGGGGARELKEHIFFKGIDWQHVYLRKYPPPLIPPRGEVNAADAFDIGSFDEEDTKGIKLLDCDQDLYKNFPLVISERWQQEVVETIYDAVNADTDKIEARRKAKNKQLGQEEDYAMGKDCIMHGYMLKLGNPFLTQWQRRYFYLFPNRLEWRGEGESRQSLLTMEQIMSVEETQIKDRKCILLRIKGGKQFVLQCESDPEFAQWLKELTCTFNEAQRLLRRAPKFLNKPRAAILEFSKPPLCHRNSSGL</sequence>
<reference key="1">
    <citation type="journal article" date="2005" name="Science">
        <title>The transcriptional landscape of the mammalian genome.</title>
        <authorList>
            <person name="Carninci P."/>
            <person name="Kasukawa T."/>
            <person name="Katayama S."/>
            <person name="Gough J."/>
            <person name="Frith M.C."/>
            <person name="Maeda N."/>
            <person name="Oyama R."/>
            <person name="Ravasi T."/>
            <person name="Lenhard B."/>
            <person name="Wells C."/>
            <person name="Kodzius R."/>
            <person name="Shimokawa K."/>
            <person name="Bajic V.B."/>
            <person name="Brenner S.E."/>
            <person name="Batalov S."/>
            <person name="Forrest A.R."/>
            <person name="Zavolan M."/>
            <person name="Davis M.J."/>
            <person name="Wilming L.G."/>
            <person name="Aidinis V."/>
            <person name="Allen J.E."/>
            <person name="Ambesi-Impiombato A."/>
            <person name="Apweiler R."/>
            <person name="Aturaliya R.N."/>
            <person name="Bailey T.L."/>
            <person name="Bansal M."/>
            <person name="Baxter L."/>
            <person name="Beisel K.W."/>
            <person name="Bersano T."/>
            <person name="Bono H."/>
            <person name="Chalk A.M."/>
            <person name="Chiu K.P."/>
            <person name="Choudhary V."/>
            <person name="Christoffels A."/>
            <person name="Clutterbuck D.R."/>
            <person name="Crowe M.L."/>
            <person name="Dalla E."/>
            <person name="Dalrymple B.P."/>
            <person name="de Bono B."/>
            <person name="Della Gatta G."/>
            <person name="di Bernardo D."/>
            <person name="Down T."/>
            <person name="Engstrom P."/>
            <person name="Fagiolini M."/>
            <person name="Faulkner G."/>
            <person name="Fletcher C.F."/>
            <person name="Fukushima T."/>
            <person name="Furuno M."/>
            <person name="Futaki S."/>
            <person name="Gariboldi M."/>
            <person name="Georgii-Hemming P."/>
            <person name="Gingeras T.R."/>
            <person name="Gojobori T."/>
            <person name="Green R.E."/>
            <person name="Gustincich S."/>
            <person name="Harbers M."/>
            <person name="Hayashi Y."/>
            <person name="Hensch T.K."/>
            <person name="Hirokawa N."/>
            <person name="Hill D."/>
            <person name="Huminiecki L."/>
            <person name="Iacono M."/>
            <person name="Ikeo K."/>
            <person name="Iwama A."/>
            <person name="Ishikawa T."/>
            <person name="Jakt M."/>
            <person name="Kanapin A."/>
            <person name="Katoh M."/>
            <person name="Kawasawa Y."/>
            <person name="Kelso J."/>
            <person name="Kitamura H."/>
            <person name="Kitano H."/>
            <person name="Kollias G."/>
            <person name="Krishnan S.P."/>
            <person name="Kruger A."/>
            <person name="Kummerfeld S.K."/>
            <person name="Kurochkin I.V."/>
            <person name="Lareau L.F."/>
            <person name="Lazarevic D."/>
            <person name="Lipovich L."/>
            <person name="Liu J."/>
            <person name="Liuni S."/>
            <person name="McWilliam S."/>
            <person name="Madan Babu M."/>
            <person name="Madera M."/>
            <person name="Marchionni L."/>
            <person name="Matsuda H."/>
            <person name="Matsuzawa S."/>
            <person name="Miki H."/>
            <person name="Mignone F."/>
            <person name="Miyake S."/>
            <person name="Morris K."/>
            <person name="Mottagui-Tabar S."/>
            <person name="Mulder N."/>
            <person name="Nakano N."/>
            <person name="Nakauchi H."/>
            <person name="Ng P."/>
            <person name="Nilsson R."/>
            <person name="Nishiguchi S."/>
            <person name="Nishikawa S."/>
            <person name="Nori F."/>
            <person name="Ohara O."/>
            <person name="Okazaki Y."/>
            <person name="Orlando V."/>
            <person name="Pang K.C."/>
            <person name="Pavan W.J."/>
            <person name="Pavesi G."/>
            <person name="Pesole G."/>
            <person name="Petrovsky N."/>
            <person name="Piazza S."/>
            <person name="Reed J."/>
            <person name="Reid J.F."/>
            <person name="Ring B.Z."/>
            <person name="Ringwald M."/>
            <person name="Rost B."/>
            <person name="Ruan Y."/>
            <person name="Salzberg S.L."/>
            <person name="Sandelin A."/>
            <person name="Schneider C."/>
            <person name="Schoenbach C."/>
            <person name="Sekiguchi K."/>
            <person name="Semple C.A."/>
            <person name="Seno S."/>
            <person name="Sessa L."/>
            <person name="Sheng Y."/>
            <person name="Shibata Y."/>
            <person name="Shimada H."/>
            <person name="Shimada K."/>
            <person name="Silva D."/>
            <person name="Sinclair B."/>
            <person name="Sperling S."/>
            <person name="Stupka E."/>
            <person name="Sugiura K."/>
            <person name="Sultana R."/>
            <person name="Takenaka Y."/>
            <person name="Taki K."/>
            <person name="Tammoja K."/>
            <person name="Tan S.L."/>
            <person name="Tang S."/>
            <person name="Taylor M.S."/>
            <person name="Tegner J."/>
            <person name="Teichmann S.A."/>
            <person name="Ueda H.R."/>
            <person name="van Nimwegen E."/>
            <person name="Verardo R."/>
            <person name="Wei C.L."/>
            <person name="Yagi K."/>
            <person name="Yamanishi H."/>
            <person name="Zabarovsky E."/>
            <person name="Zhu S."/>
            <person name="Zimmer A."/>
            <person name="Hide W."/>
            <person name="Bult C."/>
            <person name="Grimmond S.M."/>
            <person name="Teasdale R.D."/>
            <person name="Liu E.T."/>
            <person name="Brusic V."/>
            <person name="Quackenbush J."/>
            <person name="Wahlestedt C."/>
            <person name="Mattick J.S."/>
            <person name="Hume D.A."/>
            <person name="Kai C."/>
            <person name="Sasaki D."/>
            <person name="Tomaru Y."/>
            <person name="Fukuda S."/>
            <person name="Kanamori-Katayama M."/>
            <person name="Suzuki M."/>
            <person name="Aoki J."/>
            <person name="Arakawa T."/>
            <person name="Iida J."/>
            <person name="Imamura K."/>
            <person name="Itoh M."/>
            <person name="Kato T."/>
            <person name="Kawaji H."/>
            <person name="Kawagashira N."/>
            <person name="Kawashima T."/>
            <person name="Kojima M."/>
            <person name="Kondo S."/>
            <person name="Konno H."/>
            <person name="Nakano K."/>
            <person name="Ninomiya N."/>
            <person name="Nishio T."/>
            <person name="Okada M."/>
            <person name="Plessy C."/>
            <person name="Shibata K."/>
            <person name="Shiraki T."/>
            <person name="Suzuki S."/>
            <person name="Tagami M."/>
            <person name="Waki K."/>
            <person name="Watahiki A."/>
            <person name="Okamura-Oho Y."/>
            <person name="Suzuki H."/>
            <person name="Kawai J."/>
            <person name="Hayashizaki Y."/>
        </authorList>
    </citation>
    <scope>NUCLEOTIDE SEQUENCE [LARGE SCALE MRNA]</scope>
    <source>
        <strain>C57BL/6J</strain>
        <tissue>Medulla oblongata</tissue>
    </source>
</reference>
<reference key="2">
    <citation type="journal article" date="2009" name="PLoS Biol.">
        <title>Lineage-specific biology revealed by a finished genome assembly of the mouse.</title>
        <authorList>
            <person name="Church D.M."/>
            <person name="Goodstadt L."/>
            <person name="Hillier L.W."/>
            <person name="Zody M.C."/>
            <person name="Goldstein S."/>
            <person name="She X."/>
            <person name="Bult C.J."/>
            <person name="Agarwala R."/>
            <person name="Cherry J.L."/>
            <person name="DiCuccio M."/>
            <person name="Hlavina W."/>
            <person name="Kapustin Y."/>
            <person name="Meric P."/>
            <person name="Maglott D."/>
            <person name="Birtle Z."/>
            <person name="Marques A.C."/>
            <person name="Graves T."/>
            <person name="Zhou S."/>
            <person name="Teague B."/>
            <person name="Potamousis K."/>
            <person name="Churas C."/>
            <person name="Place M."/>
            <person name="Herschleb J."/>
            <person name="Runnheim R."/>
            <person name="Forrest D."/>
            <person name="Amos-Landgraf J."/>
            <person name="Schwartz D.C."/>
            <person name="Cheng Z."/>
            <person name="Lindblad-Toh K."/>
            <person name="Eichler E.E."/>
            <person name="Ponting C.P."/>
        </authorList>
    </citation>
    <scope>NUCLEOTIDE SEQUENCE [LARGE SCALE GENOMIC DNA]</scope>
    <source>
        <strain>C57BL/6J</strain>
    </source>
</reference>
<reference key="3">
    <citation type="journal article" date="2010" name="Cell">
        <title>A tissue-specific atlas of mouse protein phosphorylation and expression.</title>
        <authorList>
            <person name="Huttlin E.L."/>
            <person name="Jedrychowski M.P."/>
            <person name="Elias J.E."/>
            <person name="Goswami T."/>
            <person name="Rad R."/>
            <person name="Beausoleil S.A."/>
            <person name="Villen J."/>
            <person name="Haas W."/>
            <person name="Sowa M.E."/>
            <person name="Gygi S.P."/>
        </authorList>
    </citation>
    <scope>IDENTIFICATION BY MASS SPECTROMETRY [LARGE SCALE ANALYSIS]</scope>
    <source>
        <tissue>Brain</tissue>
    </source>
</reference>
<dbReference type="EC" id="2.7.11.15" evidence="1"/>
<dbReference type="EMBL" id="AK134672">
    <property type="protein sequence ID" value="BAE22235.1"/>
    <property type="molecule type" value="mRNA"/>
</dbReference>
<dbReference type="EMBL" id="AC107631">
    <property type="status" value="NOT_ANNOTATED_CDS"/>
    <property type="molecule type" value="Genomic_DNA"/>
</dbReference>
<dbReference type="CCDS" id="CCDS19545.1"/>
<dbReference type="RefSeq" id="NP_001272735.1">
    <property type="nucleotide sequence ID" value="NM_001285806.1"/>
</dbReference>
<dbReference type="RefSeq" id="NP_796052.2">
    <property type="nucleotide sequence ID" value="NM_177078.4"/>
</dbReference>
<dbReference type="SMR" id="Q3UYH7"/>
<dbReference type="BioGRID" id="235781">
    <property type="interactions" value="2"/>
</dbReference>
<dbReference type="FunCoup" id="Q3UYH7">
    <property type="interactions" value="1987"/>
</dbReference>
<dbReference type="IntAct" id="Q3UYH7">
    <property type="interactions" value="2"/>
</dbReference>
<dbReference type="STRING" id="10090.ENSMUSP00000070445"/>
<dbReference type="GlyGen" id="Q3UYH7">
    <property type="glycosylation" value="1 site, 1 O-linked glycan (1 site)"/>
</dbReference>
<dbReference type="iPTMnet" id="Q3UYH7"/>
<dbReference type="PhosphoSitePlus" id="Q3UYH7"/>
<dbReference type="PaxDb" id="10090-ENSMUSP00000070445"/>
<dbReference type="PeptideAtlas" id="Q3UYH7"/>
<dbReference type="ProteomicsDB" id="281902"/>
<dbReference type="Antibodypedia" id="234">
    <property type="antibodies" value="411 antibodies from 34 providers"/>
</dbReference>
<dbReference type="DNASU" id="320129"/>
<dbReference type="Ensembl" id="ENSMUST00000065167.9">
    <property type="protein sequence ID" value="ENSMUSP00000070445.5"/>
    <property type="gene ID" value="ENSMUSG00000042249.12"/>
</dbReference>
<dbReference type="GeneID" id="320129"/>
<dbReference type="KEGG" id="mmu:320129"/>
<dbReference type="UCSC" id="uc008ytt.2">
    <property type="organism name" value="mouse"/>
</dbReference>
<dbReference type="AGR" id="MGI:87941"/>
<dbReference type="CTD" id="157"/>
<dbReference type="MGI" id="MGI:87941">
    <property type="gene designation" value="Grk3"/>
</dbReference>
<dbReference type="VEuPathDB" id="HostDB:ENSMUSG00000042249"/>
<dbReference type="eggNOG" id="KOG0986">
    <property type="taxonomic scope" value="Eukaryota"/>
</dbReference>
<dbReference type="GeneTree" id="ENSGT00940000157699"/>
<dbReference type="InParanoid" id="Q3UYH7"/>
<dbReference type="OMA" id="LHTHTHD"/>
<dbReference type="OrthoDB" id="354826at2759"/>
<dbReference type="PhylomeDB" id="Q3UYH7"/>
<dbReference type="TreeFam" id="TF313940"/>
<dbReference type="BRENDA" id="2.7.11.15">
    <property type="organism ID" value="3474"/>
</dbReference>
<dbReference type="Reactome" id="R-MMU-418555">
    <property type="pathway name" value="G alpha (s) signalling events"/>
</dbReference>
<dbReference type="Reactome" id="R-MMU-8856825">
    <property type="pathway name" value="Cargo recognition for clathrin-mediated endocytosis"/>
</dbReference>
<dbReference type="BioGRID-ORCS" id="320129">
    <property type="hits" value="7 hits in 81 CRISPR screens"/>
</dbReference>
<dbReference type="ChiTaRS" id="Adrbk2">
    <property type="organism name" value="mouse"/>
</dbReference>
<dbReference type="PRO" id="PR:Q3UYH7"/>
<dbReference type="Proteomes" id="UP000000589">
    <property type="component" value="Chromosome 5"/>
</dbReference>
<dbReference type="RNAct" id="Q3UYH7">
    <property type="molecule type" value="protein"/>
</dbReference>
<dbReference type="Bgee" id="ENSMUSG00000042249">
    <property type="expression patterns" value="Expressed in rostral migratory stream and 238 other cell types or tissues"/>
</dbReference>
<dbReference type="ExpressionAtlas" id="Q3UYH7">
    <property type="expression patterns" value="baseline and differential"/>
</dbReference>
<dbReference type="GO" id="GO:0042995">
    <property type="term" value="C:cell projection"/>
    <property type="evidence" value="ECO:0007669"/>
    <property type="project" value="UniProtKB-KW"/>
</dbReference>
<dbReference type="GO" id="GO:0098794">
    <property type="term" value="C:postsynapse"/>
    <property type="evidence" value="ECO:0007669"/>
    <property type="project" value="UniProtKB-SubCell"/>
</dbReference>
<dbReference type="GO" id="GO:0098793">
    <property type="term" value="C:presynapse"/>
    <property type="evidence" value="ECO:0007669"/>
    <property type="project" value="UniProtKB-SubCell"/>
</dbReference>
<dbReference type="GO" id="GO:0005524">
    <property type="term" value="F:ATP binding"/>
    <property type="evidence" value="ECO:0007669"/>
    <property type="project" value="UniProtKB-KW"/>
</dbReference>
<dbReference type="GO" id="GO:0047696">
    <property type="term" value="F:beta-adrenergic receptor kinase activity"/>
    <property type="evidence" value="ECO:0007669"/>
    <property type="project" value="UniProtKB-EC"/>
</dbReference>
<dbReference type="GO" id="GO:0004703">
    <property type="term" value="F:G protein-coupled receptor kinase activity"/>
    <property type="evidence" value="ECO:0000314"/>
    <property type="project" value="MGI"/>
</dbReference>
<dbReference type="GO" id="GO:0031623">
    <property type="term" value="P:receptor internalization"/>
    <property type="evidence" value="ECO:0007669"/>
    <property type="project" value="Ensembl"/>
</dbReference>
<dbReference type="GO" id="GO:0007165">
    <property type="term" value="P:signal transduction"/>
    <property type="evidence" value="ECO:0007669"/>
    <property type="project" value="InterPro"/>
</dbReference>
<dbReference type="CDD" id="cd01240">
    <property type="entry name" value="PH_GRK2_subgroup"/>
    <property type="match status" value="1"/>
</dbReference>
<dbReference type="CDD" id="cd08747">
    <property type="entry name" value="RGS_GRK2_GRK3"/>
    <property type="match status" value="1"/>
</dbReference>
<dbReference type="FunFam" id="1.10.287.1270:FF:000001">
    <property type="entry name" value="G protein-coupled receptor kinase"/>
    <property type="match status" value="1"/>
</dbReference>
<dbReference type="FunFam" id="1.10.510.10:FF:000118">
    <property type="entry name" value="G protein-coupled receptor kinase"/>
    <property type="match status" value="1"/>
</dbReference>
<dbReference type="FunFam" id="2.30.29.30:FF:000084">
    <property type="entry name" value="G protein-coupled receptor kinase"/>
    <property type="match status" value="1"/>
</dbReference>
<dbReference type="FunFam" id="3.30.200.20:FF:000068">
    <property type="entry name" value="G protein-coupled receptor kinase"/>
    <property type="match status" value="1"/>
</dbReference>
<dbReference type="Gene3D" id="1.10.287.1270">
    <property type="match status" value="3"/>
</dbReference>
<dbReference type="Gene3D" id="3.30.200.20">
    <property type="entry name" value="Phosphorylase Kinase, domain 1"/>
    <property type="match status" value="1"/>
</dbReference>
<dbReference type="Gene3D" id="2.30.29.30">
    <property type="entry name" value="Pleckstrin-homology domain (PH domain)/Phosphotyrosine-binding domain (PTB)"/>
    <property type="match status" value="1"/>
</dbReference>
<dbReference type="Gene3D" id="1.10.510.10">
    <property type="entry name" value="Transferase(Phosphotransferase) domain 1"/>
    <property type="match status" value="1"/>
</dbReference>
<dbReference type="InterPro" id="IPR000961">
    <property type="entry name" value="AGC-kinase_C"/>
</dbReference>
<dbReference type="InterPro" id="IPR000239">
    <property type="entry name" value="GPCR_kinase"/>
</dbReference>
<dbReference type="InterPro" id="IPR011009">
    <property type="entry name" value="Kinase-like_dom_sf"/>
</dbReference>
<dbReference type="InterPro" id="IPR011993">
    <property type="entry name" value="PH-like_dom_sf"/>
</dbReference>
<dbReference type="InterPro" id="IPR001849">
    <property type="entry name" value="PH_domain"/>
</dbReference>
<dbReference type="InterPro" id="IPR000719">
    <property type="entry name" value="Prot_kinase_dom"/>
</dbReference>
<dbReference type="InterPro" id="IPR017441">
    <property type="entry name" value="Protein_kinase_ATP_BS"/>
</dbReference>
<dbReference type="InterPro" id="IPR016137">
    <property type="entry name" value="RGS"/>
</dbReference>
<dbReference type="InterPro" id="IPR036305">
    <property type="entry name" value="RGS_sf"/>
</dbReference>
<dbReference type="InterPro" id="IPR008271">
    <property type="entry name" value="Ser/Thr_kinase_AS"/>
</dbReference>
<dbReference type="PANTHER" id="PTHR24355:SF17">
    <property type="entry name" value="BETA-ADRENERGIC RECEPTOR KINASE 2"/>
    <property type="match status" value="1"/>
</dbReference>
<dbReference type="PANTHER" id="PTHR24355">
    <property type="entry name" value="G PROTEIN-COUPLED RECEPTOR KINASE/RIBOSOMAL PROTEIN S6 KINASE"/>
    <property type="match status" value="1"/>
</dbReference>
<dbReference type="Pfam" id="PF00169">
    <property type="entry name" value="PH"/>
    <property type="match status" value="1"/>
</dbReference>
<dbReference type="Pfam" id="PF00069">
    <property type="entry name" value="Pkinase"/>
    <property type="match status" value="1"/>
</dbReference>
<dbReference type="Pfam" id="PF00615">
    <property type="entry name" value="RGS"/>
    <property type="match status" value="1"/>
</dbReference>
<dbReference type="PRINTS" id="PR00717">
    <property type="entry name" value="GPCRKINASE"/>
</dbReference>
<dbReference type="SMART" id="SM00233">
    <property type="entry name" value="PH"/>
    <property type="match status" value="1"/>
</dbReference>
<dbReference type="SMART" id="SM00315">
    <property type="entry name" value="RGS"/>
    <property type="match status" value="1"/>
</dbReference>
<dbReference type="SMART" id="SM00133">
    <property type="entry name" value="S_TK_X"/>
    <property type="match status" value="1"/>
</dbReference>
<dbReference type="SMART" id="SM00220">
    <property type="entry name" value="S_TKc"/>
    <property type="match status" value="1"/>
</dbReference>
<dbReference type="SUPFAM" id="SSF50729">
    <property type="entry name" value="PH domain-like"/>
    <property type="match status" value="1"/>
</dbReference>
<dbReference type="SUPFAM" id="SSF56112">
    <property type="entry name" value="Protein kinase-like (PK-like)"/>
    <property type="match status" value="1"/>
</dbReference>
<dbReference type="SUPFAM" id="SSF48097">
    <property type="entry name" value="Regulator of G-protein signaling, RGS"/>
    <property type="match status" value="1"/>
</dbReference>
<dbReference type="PROSITE" id="PS51285">
    <property type="entry name" value="AGC_KINASE_CTER"/>
    <property type="match status" value="1"/>
</dbReference>
<dbReference type="PROSITE" id="PS50003">
    <property type="entry name" value="PH_DOMAIN"/>
    <property type="match status" value="1"/>
</dbReference>
<dbReference type="PROSITE" id="PS00107">
    <property type="entry name" value="PROTEIN_KINASE_ATP"/>
    <property type="match status" value="1"/>
</dbReference>
<dbReference type="PROSITE" id="PS50011">
    <property type="entry name" value="PROTEIN_KINASE_DOM"/>
    <property type="match status" value="1"/>
</dbReference>
<dbReference type="PROSITE" id="PS00108">
    <property type="entry name" value="PROTEIN_KINASE_ST"/>
    <property type="match status" value="1"/>
</dbReference>
<dbReference type="PROSITE" id="PS50132">
    <property type="entry name" value="RGS"/>
    <property type="match status" value="1"/>
</dbReference>
<protein>
    <recommendedName>
        <fullName evidence="9">G protein-coupled receptor kinase 3</fullName>
        <ecNumber evidence="1">2.7.11.15</ecNumber>
    </recommendedName>
    <alternativeName>
        <fullName evidence="1">Beta-adrenergic receptor kinase 2</fullName>
        <shortName evidence="1">Beta-ARK-2</shortName>
    </alternativeName>
</protein>
<proteinExistence type="evidence at protein level"/>
<keyword id="KW-0067">ATP-binding</keyword>
<keyword id="KW-0966">Cell projection</keyword>
<keyword id="KW-0418">Kinase</keyword>
<keyword id="KW-0547">Nucleotide-binding</keyword>
<keyword id="KW-1185">Reference proteome</keyword>
<keyword id="KW-0723">Serine/threonine-protein kinase</keyword>
<keyword id="KW-0770">Synapse</keyword>
<keyword id="KW-0808">Transferase</keyword>
<keyword id="KW-0832">Ubl conjugation</keyword>